<protein>
    <recommendedName>
        <fullName evidence="1">UPF0154 protein BCG9842_B1526</fullName>
    </recommendedName>
</protein>
<organism>
    <name type="scientific">Bacillus cereus (strain G9842)</name>
    <dbReference type="NCBI Taxonomy" id="405531"/>
    <lineage>
        <taxon>Bacteria</taxon>
        <taxon>Bacillati</taxon>
        <taxon>Bacillota</taxon>
        <taxon>Bacilli</taxon>
        <taxon>Bacillales</taxon>
        <taxon>Bacillaceae</taxon>
        <taxon>Bacillus</taxon>
        <taxon>Bacillus cereus group</taxon>
    </lineage>
</organism>
<proteinExistence type="inferred from homology"/>
<keyword id="KW-1003">Cell membrane</keyword>
<keyword id="KW-0472">Membrane</keyword>
<keyword id="KW-0812">Transmembrane</keyword>
<keyword id="KW-1133">Transmembrane helix</keyword>
<gene>
    <name type="ordered locus">BCG9842_B1526</name>
</gene>
<feature type="chain" id="PRO_1000121041" description="UPF0154 protein BCG9842_B1526">
    <location>
        <begin position="1"/>
        <end position="73"/>
    </location>
</feature>
<feature type="transmembrane region" description="Helical" evidence="1">
    <location>
        <begin position="3"/>
        <end position="23"/>
    </location>
</feature>
<name>Y1526_BACC2</name>
<evidence type="ECO:0000255" key="1">
    <source>
        <dbReference type="HAMAP-Rule" id="MF_00363"/>
    </source>
</evidence>
<accession>B7ISM2</accession>
<comment type="subcellular location">
    <subcellularLocation>
        <location evidence="1">Cell membrane</location>
        <topology evidence="1">Single-pass membrane protein</topology>
    </subcellularLocation>
</comment>
<comment type="similarity">
    <text evidence="1">Belongs to the UPF0154 family.</text>
</comment>
<sequence>MPIWLGILVGVVALVAGVALGFFIARKYMMNYLQKNPPINEQMLKMMMMQMGQKPSQKKINQMMSAMNKQQMK</sequence>
<dbReference type="EMBL" id="CP001186">
    <property type="protein sequence ID" value="ACK95414.1"/>
    <property type="molecule type" value="Genomic_DNA"/>
</dbReference>
<dbReference type="RefSeq" id="WP_001123317.1">
    <property type="nucleotide sequence ID" value="NC_011772.1"/>
</dbReference>
<dbReference type="SMR" id="B7ISM2"/>
<dbReference type="KEGG" id="bcg:BCG9842_B1526"/>
<dbReference type="HOGENOM" id="CLU_180108_0_1_9"/>
<dbReference type="Proteomes" id="UP000006744">
    <property type="component" value="Chromosome"/>
</dbReference>
<dbReference type="GO" id="GO:0005886">
    <property type="term" value="C:plasma membrane"/>
    <property type="evidence" value="ECO:0007669"/>
    <property type="project" value="UniProtKB-SubCell"/>
</dbReference>
<dbReference type="HAMAP" id="MF_00363">
    <property type="entry name" value="UPF0154"/>
    <property type="match status" value="1"/>
</dbReference>
<dbReference type="InterPro" id="IPR005359">
    <property type="entry name" value="UPF0154"/>
</dbReference>
<dbReference type="NCBIfam" id="NF002503">
    <property type="entry name" value="PRK01844.1"/>
    <property type="match status" value="1"/>
</dbReference>
<dbReference type="Pfam" id="PF03672">
    <property type="entry name" value="UPF0154"/>
    <property type="match status" value="1"/>
</dbReference>
<reference key="1">
    <citation type="submission" date="2008-10" db="EMBL/GenBank/DDBJ databases">
        <title>Genome sequence of Bacillus cereus G9842.</title>
        <authorList>
            <person name="Dodson R.J."/>
            <person name="Durkin A.S."/>
            <person name="Rosovitz M.J."/>
            <person name="Rasko D.A."/>
            <person name="Hoffmaster A."/>
            <person name="Ravel J."/>
            <person name="Sutton G."/>
        </authorList>
    </citation>
    <scope>NUCLEOTIDE SEQUENCE [LARGE SCALE GENOMIC DNA]</scope>
    <source>
        <strain>G9842</strain>
    </source>
</reference>